<reference key="1">
    <citation type="journal article" date="2011" name="Stand. Genomic Sci.">
        <title>Complete genome sequence of Rhodospirillum rubrum type strain (S1).</title>
        <authorList>
            <person name="Munk A.C."/>
            <person name="Copeland A."/>
            <person name="Lucas S."/>
            <person name="Lapidus A."/>
            <person name="Del Rio T.G."/>
            <person name="Barry K."/>
            <person name="Detter J.C."/>
            <person name="Hammon N."/>
            <person name="Israni S."/>
            <person name="Pitluck S."/>
            <person name="Brettin T."/>
            <person name="Bruce D."/>
            <person name="Han C."/>
            <person name="Tapia R."/>
            <person name="Gilna P."/>
            <person name="Schmutz J."/>
            <person name="Larimer F."/>
            <person name="Land M."/>
            <person name="Kyrpides N.C."/>
            <person name="Mavromatis K."/>
            <person name="Richardson P."/>
            <person name="Rohde M."/>
            <person name="Goeker M."/>
            <person name="Klenk H.P."/>
            <person name="Zhang Y."/>
            <person name="Roberts G.P."/>
            <person name="Reslewic S."/>
            <person name="Schwartz D.C."/>
        </authorList>
    </citation>
    <scope>NUCLEOTIDE SEQUENCE [LARGE SCALE GENOMIC DNA]</scope>
    <source>
        <strain>ATCC 11170 / ATH 1.1.1 / DSM 467 / LMG 4362 / NCIMB 8255 / S1</strain>
    </source>
</reference>
<evidence type="ECO:0000255" key="1">
    <source>
        <dbReference type="HAMAP-Rule" id="MF_00105"/>
    </source>
</evidence>
<comment type="function">
    <text evidence="1">Necessary for efficient RNA polymerase transcription elongation past template-encoded arresting sites. The arresting sites in DNA have the property of trapping a certain fraction of elongating RNA polymerases that pass through, resulting in locked ternary complexes. Cleavage of the nascent transcript by cleavage factors such as GreA or GreB allows the resumption of elongation from the new 3'terminus. GreA releases sequences of 2 to 3 nucleotides.</text>
</comment>
<comment type="similarity">
    <text evidence="1">Belongs to the GreA/GreB family.</text>
</comment>
<keyword id="KW-0175">Coiled coil</keyword>
<keyword id="KW-0238">DNA-binding</keyword>
<keyword id="KW-1185">Reference proteome</keyword>
<keyword id="KW-0804">Transcription</keyword>
<keyword id="KW-0805">Transcription regulation</keyword>
<gene>
    <name evidence="1" type="primary">greA</name>
    <name type="ordered locus">Rru_A2887</name>
</gene>
<sequence>MEKIPMTPDGLARLEAELKSLKSVDRPAVIRAISEARDHGDLSENAEYHAARERQSFIEGRIKELEDVTSRAEVIDISKLSGDTVRFGATVSVLDEDSEEQTTYQIVGAHEADLKAGRISVASPIGKALIGKKVGDSIEVKAPGGSKFYEVTMVRFG</sequence>
<feature type="chain" id="PRO_1000034290" description="Transcription elongation factor GreA">
    <location>
        <begin position="1"/>
        <end position="157"/>
    </location>
</feature>
<feature type="coiled-coil region" evidence="1">
    <location>
        <begin position="46"/>
        <end position="67"/>
    </location>
</feature>
<proteinExistence type="inferred from homology"/>
<protein>
    <recommendedName>
        <fullName evidence="1">Transcription elongation factor GreA</fullName>
    </recommendedName>
    <alternativeName>
        <fullName evidence="1">Transcript cleavage factor GreA</fullName>
    </alternativeName>
</protein>
<organism>
    <name type="scientific">Rhodospirillum rubrum (strain ATCC 11170 / ATH 1.1.1 / DSM 467 / LMG 4362 / NCIMB 8255 / S1)</name>
    <dbReference type="NCBI Taxonomy" id="269796"/>
    <lineage>
        <taxon>Bacteria</taxon>
        <taxon>Pseudomonadati</taxon>
        <taxon>Pseudomonadota</taxon>
        <taxon>Alphaproteobacteria</taxon>
        <taxon>Rhodospirillales</taxon>
        <taxon>Rhodospirillaceae</taxon>
        <taxon>Rhodospirillum</taxon>
    </lineage>
</organism>
<dbReference type="EMBL" id="CP000230">
    <property type="protein sequence ID" value="ABC23684.1"/>
    <property type="molecule type" value="Genomic_DNA"/>
</dbReference>
<dbReference type="RefSeq" id="WP_011390637.1">
    <property type="nucleotide sequence ID" value="NC_007643.1"/>
</dbReference>
<dbReference type="RefSeq" id="YP_427971.1">
    <property type="nucleotide sequence ID" value="NC_007643.1"/>
</dbReference>
<dbReference type="SMR" id="Q2RQB1"/>
<dbReference type="STRING" id="269796.Rru_A2887"/>
<dbReference type="EnsemblBacteria" id="ABC23684">
    <property type="protein sequence ID" value="ABC23684"/>
    <property type="gene ID" value="Rru_A2887"/>
</dbReference>
<dbReference type="KEGG" id="rru:Rru_A2887"/>
<dbReference type="PATRIC" id="fig|269796.9.peg.2997"/>
<dbReference type="eggNOG" id="COG0782">
    <property type="taxonomic scope" value="Bacteria"/>
</dbReference>
<dbReference type="HOGENOM" id="CLU_101379_2_0_5"/>
<dbReference type="PhylomeDB" id="Q2RQB1"/>
<dbReference type="Proteomes" id="UP000001929">
    <property type="component" value="Chromosome"/>
</dbReference>
<dbReference type="GO" id="GO:0003677">
    <property type="term" value="F:DNA binding"/>
    <property type="evidence" value="ECO:0007669"/>
    <property type="project" value="UniProtKB-UniRule"/>
</dbReference>
<dbReference type="GO" id="GO:0070063">
    <property type="term" value="F:RNA polymerase binding"/>
    <property type="evidence" value="ECO:0007669"/>
    <property type="project" value="InterPro"/>
</dbReference>
<dbReference type="GO" id="GO:0006354">
    <property type="term" value="P:DNA-templated transcription elongation"/>
    <property type="evidence" value="ECO:0007669"/>
    <property type="project" value="TreeGrafter"/>
</dbReference>
<dbReference type="GO" id="GO:0032784">
    <property type="term" value="P:regulation of DNA-templated transcription elongation"/>
    <property type="evidence" value="ECO:0007669"/>
    <property type="project" value="UniProtKB-UniRule"/>
</dbReference>
<dbReference type="FunFam" id="1.10.287.180:FF:000001">
    <property type="entry name" value="Transcription elongation factor GreA"/>
    <property type="match status" value="1"/>
</dbReference>
<dbReference type="FunFam" id="3.10.50.30:FF:000001">
    <property type="entry name" value="Transcription elongation factor GreA"/>
    <property type="match status" value="1"/>
</dbReference>
<dbReference type="Gene3D" id="3.10.50.30">
    <property type="entry name" value="Transcription elongation factor, GreA/GreB, C-terminal domain"/>
    <property type="match status" value="1"/>
</dbReference>
<dbReference type="Gene3D" id="1.10.287.180">
    <property type="entry name" value="Transcription elongation factor, GreA/GreB, N-terminal domain"/>
    <property type="match status" value="1"/>
</dbReference>
<dbReference type="HAMAP" id="MF_00105">
    <property type="entry name" value="GreA_GreB"/>
    <property type="match status" value="1"/>
</dbReference>
<dbReference type="InterPro" id="IPR036953">
    <property type="entry name" value="GreA/GreB_C_sf"/>
</dbReference>
<dbReference type="InterPro" id="IPR018151">
    <property type="entry name" value="TF_GreA/GreB_CS"/>
</dbReference>
<dbReference type="InterPro" id="IPR006359">
    <property type="entry name" value="Tscrpt_elong_fac_GreA"/>
</dbReference>
<dbReference type="InterPro" id="IPR028624">
    <property type="entry name" value="Tscrpt_elong_fac_GreA/B"/>
</dbReference>
<dbReference type="InterPro" id="IPR001437">
    <property type="entry name" value="Tscrpt_elong_fac_GreA/B_C"/>
</dbReference>
<dbReference type="InterPro" id="IPR023459">
    <property type="entry name" value="Tscrpt_elong_fac_GreA/B_fam"/>
</dbReference>
<dbReference type="InterPro" id="IPR022691">
    <property type="entry name" value="Tscrpt_elong_fac_GreA/B_N"/>
</dbReference>
<dbReference type="InterPro" id="IPR036805">
    <property type="entry name" value="Tscrpt_elong_fac_GreA/B_N_sf"/>
</dbReference>
<dbReference type="NCBIfam" id="TIGR01462">
    <property type="entry name" value="greA"/>
    <property type="match status" value="1"/>
</dbReference>
<dbReference type="NCBIfam" id="NF001261">
    <property type="entry name" value="PRK00226.1-2"/>
    <property type="match status" value="1"/>
</dbReference>
<dbReference type="NCBIfam" id="NF001263">
    <property type="entry name" value="PRK00226.1-4"/>
    <property type="match status" value="1"/>
</dbReference>
<dbReference type="NCBIfam" id="NF001264">
    <property type="entry name" value="PRK00226.1-5"/>
    <property type="match status" value="1"/>
</dbReference>
<dbReference type="PANTHER" id="PTHR30437">
    <property type="entry name" value="TRANSCRIPTION ELONGATION FACTOR GREA"/>
    <property type="match status" value="1"/>
</dbReference>
<dbReference type="PANTHER" id="PTHR30437:SF4">
    <property type="entry name" value="TRANSCRIPTION ELONGATION FACTOR GREA"/>
    <property type="match status" value="1"/>
</dbReference>
<dbReference type="Pfam" id="PF01272">
    <property type="entry name" value="GreA_GreB"/>
    <property type="match status" value="1"/>
</dbReference>
<dbReference type="Pfam" id="PF03449">
    <property type="entry name" value="GreA_GreB_N"/>
    <property type="match status" value="1"/>
</dbReference>
<dbReference type="PIRSF" id="PIRSF006092">
    <property type="entry name" value="GreA_GreB"/>
    <property type="match status" value="1"/>
</dbReference>
<dbReference type="SUPFAM" id="SSF54534">
    <property type="entry name" value="FKBP-like"/>
    <property type="match status" value="1"/>
</dbReference>
<dbReference type="SUPFAM" id="SSF46557">
    <property type="entry name" value="GreA transcript cleavage protein, N-terminal domain"/>
    <property type="match status" value="1"/>
</dbReference>
<dbReference type="PROSITE" id="PS00829">
    <property type="entry name" value="GREAB_1"/>
    <property type="match status" value="1"/>
</dbReference>
<dbReference type="PROSITE" id="PS00830">
    <property type="entry name" value="GREAB_2"/>
    <property type="match status" value="1"/>
</dbReference>
<accession>Q2RQB1</accession>
<name>GREA_RHORT</name>